<feature type="chain" id="PRO_0000210668" description="Uncharacterized protein MPN_375">
    <location>
        <begin position="1"/>
        <end position="129"/>
    </location>
</feature>
<keyword id="KW-1185">Reference proteome</keyword>
<gene>
    <name type="ordered locus">MPN_375</name>
    <name type="ORF">A19_orf129</name>
    <name type="ORF">MP461</name>
</gene>
<organism>
    <name type="scientific">Mycoplasma pneumoniae (strain ATCC 29342 / M129 / Subtype 1)</name>
    <name type="common">Mycoplasmoides pneumoniae</name>
    <dbReference type="NCBI Taxonomy" id="272634"/>
    <lineage>
        <taxon>Bacteria</taxon>
        <taxon>Bacillati</taxon>
        <taxon>Mycoplasmatota</taxon>
        <taxon>Mycoplasmoidales</taxon>
        <taxon>Mycoplasmoidaceae</taxon>
        <taxon>Mycoplasmoides</taxon>
    </lineage>
</organism>
<name>Y375_MYCPN</name>
<reference key="1">
    <citation type="journal article" date="1996" name="Nucleic Acids Res.">
        <title>Complete sequence analysis of the genome of the bacterium Mycoplasma pneumoniae.</title>
        <authorList>
            <person name="Himmelreich R."/>
            <person name="Hilbert H."/>
            <person name="Plagens H."/>
            <person name="Pirkl E."/>
            <person name="Li B.-C."/>
            <person name="Herrmann R."/>
        </authorList>
    </citation>
    <scope>NUCLEOTIDE SEQUENCE [LARGE SCALE GENOMIC DNA]</scope>
    <source>
        <strain>ATCC 29342 / M129 / Subtype 1</strain>
    </source>
</reference>
<evidence type="ECO:0000305" key="1"/>
<proteinExistence type="predicted"/>
<accession>P75406</accession>
<dbReference type="EMBL" id="U00089">
    <property type="protein sequence ID" value="AAB96109.1"/>
    <property type="molecule type" value="Genomic_DNA"/>
</dbReference>
<dbReference type="PIR" id="S73787">
    <property type="entry name" value="S73787"/>
</dbReference>
<dbReference type="RefSeq" id="NP_110063.1">
    <property type="nucleotide sequence ID" value="NC_000912.1"/>
</dbReference>
<dbReference type="RefSeq" id="WP_010874731.1">
    <property type="nucleotide sequence ID" value="NZ_OU342337.1"/>
</dbReference>
<dbReference type="STRING" id="272634.MPN_375"/>
<dbReference type="EnsemblBacteria" id="AAB96109">
    <property type="protein sequence ID" value="AAB96109"/>
    <property type="gene ID" value="MPN_375"/>
</dbReference>
<dbReference type="KEGG" id="mpn:MPN_375"/>
<dbReference type="PATRIC" id="fig|272634.6.peg.406"/>
<dbReference type="HOGENOM" id="CLU_1946443_0_0_14"/>
<dbReference type="BioCyc" id="MPNE272634:G1GJ3-590-MONOMER"/>
<dbReference type="Proteomes" id="UP000000808">
    <property type="component" value="Chromosome"/>
</dbReference>
<sequence>MSFGLVGTVNNNGWKSPFRHETKYRAGYDKFKYYKTHYRGAKKAGTNDDRWRWTAWFDLDFAHQKIVLIERGELHRQADLKKSDPATNETSKTVWGSIKEKLLQNVNNLHSEKGVFLWFRQSGFTTTRN</sequence>
<protein>
    <recommendedName>
        <fullName>Uncharacterized protein MPN_375</fullName>
    </recommendedName>
</protein>
<comment type="similarity">
    <text evidence="1">To M.pneumoniae MPN_376 N-terminal region.</text>
</comment>